<proteinExistence type="inferred from homology"/>
<keyword id="KW-0963">Cytoplasm</keyword>
<keyword id="KW-0488">Methylation</keyword>
<keyword id="KW-0648">Protein biosynthesis</keyword>
<keyword id="KW-1185">Reference proteome</keyword>
<accession>Q1GYE8</accession>
<evidence type="ECO:0000255" key="1">
    <source>
        <dbReference type="HAMAP-Rule" id="MF_00093"/>
    </source>
</evidence>
<feature type="chain" id="PRO_0000263296" description="Peptide chain release factor 1">
    <location>
        <begin position="1"/>
        <end position="360"/>
    </location>
</feature>
<feature type="modified residue" description="N5-methylglutamine" evidence="1">
    <location>
        <position position="235"/>
    </location>
</feature>
<sequence>MKPSMIKKLATLSERLDELNRLLSSEDVTNDIDNYRKITREHAEITPIVEQFRAYEQAEIDIKEAQAMLADPEMKEFAQEETEAGKQKLDDIEKQLQKLLLPKDPNDERNIFLEIRAGTGGDESALFAGDLFRMYSRYAERQGWKVEIVSANESEVGGYKEIIAKIEGFGAYSKLKFESGGHRVQRVPETETQGRIHTSACTVAVLPEVDEVSDVTINPADIRIDTFRASGAGGQHINKTDSAVRITHFPTGIVVECQDGRSQHSNKAQAMQVLAARIKAKQVDEQQSKIASERRSLIGSGDRSERIRTYNYPQGRITDHRINLTLYKIDAITEGDMDELINALAAEHQADLLATLGEDN</sequence>
<gene>
    <name evidence="1" type="primary">prfA</name>
    <name type="ordered locus">Mfla_2474</name>
</gene>
<name>RF1_METFK</name>
<comment type="function">
    <text evidence="1">Peptide chain release factor 1 directs the termination of translation in response to the peptide chain termination codons UAG and UAA.</text>
</comment>
<comment type="subcellular location">
    <subcellularLocation>
        <location evidence="1">Cytoplasm</location>
    </subcellularLocation>
</comment>
<comment type="PTM">
    <text evidence="1">Methylated by PrmC. Methylation increases the termination efficiency of RF1.</text>
</comment>
<comment type="similarity">
    <text evidence="1">Belongs to the prokaryotic/mitochondrial release factor family.</text>
</comment>
<dbReference type="EMBL" id="CP000284">
    <property type="protein sequence ID" value="ABE50739.1"/>
    <property type="molecule type" value="Genomic_DNA"/>
</dbReference>
<dbReference type="RefSeq" id="WP_011480692.1">
    <property type="nucleotide sequence ID" value="NC_007947.1"/>
</dbReference>
<dbReference type="SMR" id="Q1GYE8"/>
<dbReference type="STRING" id="265072.Mfla_2474"/>
<dbReference type="KEGG" id="mfa:Mfla_2474"/>
<dbReference type="eggNOG" id="COG0216">
    <property type="taxonomic scope" value="Bacteria"/>
</dbReference>
<dbReference type="HOGENOM" id="CLU_036856_0_1_4"/>
<dbReference type="OrthoDB" id="9806673at2"/>
<dbReference type="Proteomes" id="UP000002440">
    <property type="component" value="Chromosome"/>
</dbReference>
<dbReference type="GO" id="GO:0005737">
    <property type="term" value="C:cytoplasm"/>
    <property type="evidence" value="ECO:0007669"/>
    <property type="project" value="UniProtKB-SubCell"/>
</dbReference>
<dbReference type="GO" id="GO:0016149">
    <property type="term" value="F:translation release factor activity, codon specific"/>
    <property type="evidence" value="ECO:0007669"/>
    <property type="project" value="UniProtKB-UniRule"/>
</dbReference>
<dbReference type="FunFam" id="3.30.160.20:FF:000004">
    <property type="entry name" value="Peptide chain release factor 1"/>
    <property type="match status" value="1"/>
</dbReference>
<dbReference type="FunFam" id="3.30.70.1660:FF:000002">
    <property type="entry name" value="Peptide chain release factor 1"/>
    <property type="match status" value="1"/>
</dbReference>
<dbReference type="FunFam" id="3.30.70.1660:FF:000004">
    <property type="entry name" value="Peptide chain release factor 1"/>
    <property type="match status" value="1"/>
</dbReference>
<dbReference type="Gene3D" id="3.30.160.20">
    <property type="match status" value="1"/>
</dbReference>
<dbReference type="Gene3D" id="3.30.70.1660">
    <property type="match status" value="1"/>
</dbReference>
<dbReference type="Gene3D" id="6.10.140.1950">
    <property type="match status" value="1"/>
</dbReference>
<dbReference type="HAMAP" id="MF_00093">
    <property type="entry name" value="Rel_fac_1"/>
    <property type="match status" value="1"/>
</dbReference>
<dbReference type="InterPro" id="IPR005139">
    <property type="entry name" value="PCRF"/>
</dbReference>
<dbReference type="InterPro" id="IPR000352">
    <property type="entry name" value="Pep_chain_release_fac_I"/>
</dbReference>
<dbReference type="InterPro" id="IPR045853">
    <property type="entry name" value="Pep_chain_release_fac_I_sf"/>
</dbReference>
<dbReference type="InterPro" id="IPR050057">
    <property type="entry name" value="Prokaryotic/Mito_RF"/>
</dbReference>
<dbReference type="InterPro" id="IPR004373">
    <property type="entry name" value="RF-1"/>
</dbReference>
<dbReference type="NCBIfam" id="TIGR00019">
    <property type="entry name" value="prfA"/>
    <property type="match status" value="1"/>
</dbReference>
<dbReference type="NCBIfam" id="NF001859">
    <property type="entry name" value="PRK00591.1"/>
    <property type="match status" value="1"/>
</dbReference>
<dbReference type="PANTHER" id="PTHR43804">
    <property type="entry name" value="LD18447P"/>
    <property type="match status" value="1"/>
</dbReference>
<dbReference type="PANTHER" id="PTHR43804:SF7">
    <property type="entry name" value="LD18447P"/>
    <property type="match status" value="1"/>
</dbReference>
<dbReference type="Pfam" id="PF03462">
    <property type="entry name" value="PCRF"/>
    <property type="match status" value="1"/>
</dbReference>
<dbReference type="Pfam" id="PF00472">
    <property type="entry name" value="RF-1"/>
    <property type="match status" value="1"/>
</dbReference>
<dbReference type="SMART" id="SM00937">
    <property type="entry name" value="PCRF"/>
    <property type="match status" value="1"/>
</dbReference>
<dbReference type="SUPFAM" id="SSF75620">
    <property type="entry name" value="Release factor"/>
    <property type="match status" value="1"/>
</dbReference>
<dbReference type="PROSITE" id="PS00745">
    <property type="entry name" value="RF_PROK_I"/>
    <property type="match status" value="1"/>
</dbReference>
<reference key="1">
    <citation type="submission" date="2006-03" db="EMBL/GenBank/DDBJ databases">
        <title>Complete sequence of Methylobacillus flagellatus KT.</title>
        <authorList>
            <consortium name="US DOE Joint Genome Institute"/>
            <person name="Copeland A."/>
            <person name="Lucas S."/>
            <person name="Lapidus A."/>
            <person name="Barry K."/>
            <person name="Detter J.C."/>
            <person name="Glavina del Rio T."/>
            <person name="Hammon N."/>
            <person name="Israni S."/>
            <person name="Dalin E."/>
            <person name="Tice H."/>
            <person name="Pitluck S."/>
            <person name="Brettin T."/>
            <person name="Bruce D."/>
            <person name="Han C."/>
            <person name="Tapia R."/>
            <person name="Saunders E."/>
            <person name="Gilna P."/>
            <person name="Schmutz J."/>
            <person name="Larimer F."/>
            <person name="Land M."/>
            <person name="Kyrpides N."/>
            <person name="Anderson I."/>
            <person name="Richardson P."/>
        </authorList>
    </citation>
    <scope>NUCLEOTIDE SEQUENCE [LARGE SCALE GENOMIC DNA]</scope>
    <source>
        <strain>ATCC 51484 / DSM 6875 / VKM B-1610 / KT</strain>
    </source>
</reference>
<protein>
    <recommendedName>
        <fullName evidence="1">Peptide chain release factor 1</fullName>
        <shortName evidence="1">RF-1</shortName>
    </recommendedName>
</protein>
<organism>
    <name type="scientific">Methylobacillus flagellatus (strain ATCC 51484 / DSM 6875 / VKM B-1610 / KT)</name>
    <dbReference type="NCBI Taxonomy" id="265072"/>
    <lineage>
        <taxon>Bacteria</taxon>
        <taxon>Pseudomonadati</taxon>
        <taxon>Pseudomonadota</taxon>
        <taxon>Betaproteobacteria</taxon>
        <taxon>Nitrosomonadales</taxon>
        <taxon>Methylophilaceae</taxon>
        <taxon>Methylobacillus</taxon>
    </lineage>
</organism>